<protein>
    <recommendedName>
        <fullName>Early growth response protein 4</fullName>
        <shortName>EGR-4</shortName>
    </recommendedName>
    <alternativeName>
        <fullName>Early response protein NGFI-C</fullName>
    </alternativeName>
    <alternativeName>
        <fullName>Nerve growth factor-induced protein C</fullName>
        <shortName>NGFI-C</shortName>
    </alternativeName>
</protein>
<organism>
    <name type="scientific">Rattus norvegicus</name>
    <name type="common">Rat</name>
    <dbReference type="NCBI Taxonomy" id="10116"/>
    <lineage>
        <taxon>Eukaryota</taxon>
        <taxon>Metazoa</taxon>
        <taxon>Chordata</taxon>
        <taxon>Craniata</taxon>
        <taxon>Vertebrata</taxon>
        <taxon>Euteleostomi</taxon>
        <taxon>Mammalia</taxon>
        <taxon>Eutheria</taxon>
        <taxon>Euarchontoglires</taxon>
        <taxon>Glires</taxon>
        <taxon>Rodentia</taxon>
        <taxon>Myomorpha</taxon>
        <taxon>Muroidea</taxon>
        <taxon>Muridae</taxon>
        <taxon>Murinae</taxon>
        <taxon>Rattus</taxon>
    </lineage>
</organism>
<dbReference type="EMBL" id="M65008">
    <property type="protein sequence ID" value="AAA41698.1"/>
    <property type="molecule type" value="mRNA"/>
</dbReference>
<dbReference type="EMBL" id="M92433">
    <property type="protein sequence ID" value="AAA41699.1"/>
    <property type="molecule type" value="Genomic_DNA"/>
</dbReference>
<dbReference type="PIR" id="A45285">
    <property type="entry name" value="A45285"/>
</dbReference>
<dbReference type="RefSeq" id="NP_062010.1">
    <property type="nucleotide sequence ID" value="NM_019137.1"/>
</dbReference>
<dbReference type="SMR" id="Q00911"/>
<dbReference type="FunCoup" id="Q00911">
    <property type="interactions" value="13"/>
</dbReference>
<dbReference type="STRING" id="10116.ENSRNOP00000021097"/>
<dbReference type="GlyGen" id="Q00911">
    <property type="glycosylation" value="1 site"/>
</dbReference>
<dbReference type="PhosphoSitePlus" id="Q00911"/>
<dbReference type="PaxDb" id="10116-ENSRNOP00000021097"/>
<dbReference type="GeneID" id="25129"/>
<dbReference type="KEGG" id="rno:25129"/>
<dbReference type="UCSC" id="RGD:2546">
    <property type="organism name" value="rat"/>
</dbReference>
<dbReference type="AGR" id="RGD:2546"/>
<dbReference type="CTD" id="1961"/>
<dbReference type="RGD" id="2546">
    <property type="gene designation" value="Egr4"/>
</dbReference>
<dbReference type="eggNOG" id="KOG1721">
    <property type="taxonomic scope" value="Eukaryota"/>
</dbReference>
<dbReference type="InParanoid" id="Q00911"/>
<dbReference type="OrthoDB" id="79336at9989"/>
<dbReference type="PhylomeDB" id="Q00911"/>
<dbReference type="PRO" id="PR:Q00911"/>
<dbReference type="Proteomes" id="UP000002494">
    <property type="component" value="Unplaced"/>
</dbReference>
<dbReference type="GO" id="GO:0005634">
    <property type="term" value="C:nucleus"/>
    <property type="evidence" value="ECO:0007669"/>
    <property type="project" value="UniProtKB-SubCell"/>
</dbReference>
<dbReference type="GO" id="GO:0001228">
    <property type="term" value="F:DNA-binding transcription activator activity, RNA polymerase II-specific"/>
    <property type="evidence" value="ECO:0000266"/>
    <property type="project" value="RGD"/>
</dbReference>
<dbReference type="GO" id="GO:0000981">
    <property type="term" value="F:DNA-binding transcription factor activity, RNA polymerase II-specific"/>
    <property type="evidence" value="ECO:0000318"/>
    <property type="project" value="GO_Central"/>
</dbReference>
<dbReference type="GO" id="GO:0000978">
    <property type="term" value="F:RNA polymerase II cis-regulatory region sequence-specific DNA binding"/>
    <property type="evidence" value="ECO:0000318"/>
    <property type="project" value="GO_Central"/>
</dbReference>
<dbReference type="GO" id="GO:0000977">
    <property type="term" value="F:RNA polymerase II transcription regulatory region sequence-specific DNA binding"/>
    <property type="evidence" value="ECO:0000314"/>
    <property type="project" value="RGD"/>
</dbReference>
<dbReference type="GO" id="GO:0043565">
    <property type="term" value="F:sequence-specific DNA binding"/>
    <property type="evidence" value="ECO:0000266"/>
    <property type="project" value="RGD"/>
</dbReference>
<dbReference type="GO" id="GO:1990837">
    <property type="term" value="F:sequence-specific double-stranded DNA binding"/>
    <property type="evidence" value="ECO:0000266"/>
    <property type="project" value="RGD"/>
</dbReference>
<dbReference type="GO" id="GO:0008270">
    <property type="term" value="F:zinc ion binding"/>
    <property type="evidence" value="ECO:0007669"/>
    <property type="project" value="UniProtKB-KW"/>
</dbReference>
<dbReference type="GO" id="GO:0071363">
    <property type="term" value="P:cellular response to growth factor stimulus"/>
    <property type="evidence" value="ECO:0000270"/>
    <property type="project" value="RGD"/>
</dbReference>
<dbReference type="GO" id="GO:0045944">
    <property type="term" value="P:positive regulation of transcription by RNA polymerase II"/>
    <property type="evidence" value="ECO:0000314"/>
    <property type="project" value="RGD"/>
</dbReference>
<dbReference type="GO" id="GO:0006357">
    <property type="term" value="P:regulation of transcription by RNA polymerase II"/>
    <property type="evidence" value="ECO:0000318"/>
    <property type="project" value="GO_Central"/>
</dbReference>
<dbReference type="FunFam" id="3.30.160.60:FF:000324">
    <property type="entry name" value="Early growth response protein 4"/>
    <property type="match status" value="1"/>
</dbReference>
<dbReference type="FunFam" id="3.30.160.60:FF:000419">
    <property type="entry name" value="Early growth response protein 4"/>
    <property type="match status" value="1"/>
</dbReference>
<dbReference type="FunFam" id="3.30.160.60:FF:001289">
    <property type="entry name" value="Zinc finger protein 574"/>
    <property type="match status" value="1"/>
</dbReference>
<dbReference type="Gene3D" id="3.30.160.60">
    <property type="entry name" value="Classic Zinc Finger"/>
    <property type="match status" value="3"/>
</dbReference>
<dbReference type="InterPro" id="IPR036236">
    <property type="entry name" value="Znf_C2H2_sf"/>
</dbReference>
<dbReference type="InterPro" id="IPR013087">
    <property type="entry name" value="Znf_C2H2_type"/>
</dbReference>
<dbReference type="PANTHER" id="PTHR23235:SF58">
    <property type="entry name" value="EARLY GROWTH RESPONSE PROTEIN 4"/>
    <property type="match status" value="1"/>
</dbReference>
<dbReference type="PANTHER" id="PTHR23235">
    <property type="entry name" value="KRUEPPEL-LIKE TRANSCRIPTION FACTOR"/>
    <property type="match status" value="1"/>
</dbReference>
<dbReference type="Pfam" id="PF00096">
    <property type="entry name" value="zf-C2H2"/>
    <property type="match status" value="3"/>
</dbReference>
<dbReference type="SMART" id="SM00355">
    <property type="entry name" value="ZnF_C2H2"/>
    <property type="match status" value="3"/>
</dbReference>
<dbReference type="SUPFAM" id="SSF57667">
    <property type="entry name" value="beta-beta-alpha zinc fingers"/>
    <property type="match status" value="2"/>
</dbReference>
<dbReference type="PROSITE" id="PS00028">
    <property type="entry name" value="ZINC_FINGER_C2H2_1"/>
    <property type="match status" value="3"/>
</dbReference>
<dbReference type="PROSITE" id="PS50157">
    <property type="entry name" value="ZINC_FINGER_C2H2_2"/>
    <property type="match status" value="3"/>
</dbReference>
<gene>
    <name type="primary">Egr4</name>
    <name type="synonym">Egr-4</name>
    <name type="synonym">Ngfic</name>
</gene>
<accession>Q00911</accession>
<proteinExistence type="evidence at transcript level"/>
<keyword id="KW-0010">Activator</keyword>
<keyword id="KW-0238">DNA-binding</keyword>
<keyword id="KW-0479">Metal-binding</keyword>
<keyword id="KW-0539">Nucleus</keyword>
<keyword id="KW-1185">Reference proteome</keyword>
<keyword id="KW-0677">Repeat</keyword>
<keyword id="KW-0804">Transcription</keyword>
<keyword id="KW-0805">Transcription regulation</keyword>
<keyword id="KW-0862">Zinc</keyword>
<keyword id="KW-0863">Zinc-finger</keyword>
<name>EGR4_RAT</name>
<reference key="1">
    <citation type="journal article" date="1991" name="Mol. Cell. Biol.">
        <title>The early response gene NGFI-C encodes a zinc finger transcriptional activator and is a member of the GCGGGGGCG (GSG) element-binding protein family.</title>
        <authorList>
            <person name="Crosby S.D."/>
            <person name="Puetz J.J."/>
            <person name="Simburger K.S."/>
            <person name="Fahrner T.J."/>
            <person name="Milbrandt J."/>
        </authorList>
    </citation>
    <scope>NUCLEOTIDE SEQUENCE [MRNA]</scope>
    <scope>FUNCTION</scope>
    <scope>INDUCTION</scope>
</reference>
<reference key="2">
    <citation type="journal article" date="1992" name="Proc. Natl. Acad. Sci. U.S.A.">
        <title>Neural-specific expression, genomic structure, and chromosomal localization of the gene encoding the zinc-finger transcription factor NGFI-C.</title>
        <authorList>
            <person name="Crosby S.D."/>
            <person name="Veile R.A."/>
            <person name="Donis-Keller H."/>
            <person name="Baraban J.M."/>
            <person name="Bhat R.V."/>
            <person name="Simburger K.S."/>
            <person name="Milbrandt J."/>
        </authorList>
    </citation>
    <scope>NUCLEOTIDE SEQUENCE [GENOMIC DNA]</scope>
</reference>
<feature type="chain" id="PRO_0000047130" description="Early growth response protein 4">
    <location>
        <begin position="1"/>
        <end position="478"/>
    </location>
</feature>
<feature type="zinc finger region" description="C2H2-type 1" evidence="1">
    <location>
        <begin position="372"/>
        <end position="396"/>
    </location>
</feature>
<feature type="zinc finger region" description="C2H2-type 2" evidence="1">
    <location>
        <begin position="402"/>
        <end position="424"/>
    </location>
</feature>
<feature type="zinc finger region" description="C2H2-type 3" evidence="1">
    <location>
        <begin position="430"/>
        <end position="452"/>
    </location>
</feature>
<feature type="region of interest" description="Disordered" evidence="2">
    <location>
        <begin position="15"/>
        <end position="37"/>
    </location>
</feature>
<comment type="function">
    <text evidence="3">Transcriptional regulator. Recognizes and binds to the DNA sequence 5'-GCGGGGGCG-3' (GSG). Activates the transcription of target genes whose products are required for mitogenesis and differentiation.</text>
</comment>
<comment type="subcellular location">
    <subcellularLocation>
        <location>Nucleus</location>
    </subcellularLocation>
</comment>
<comment type="induction">
    <text evidence="3">By nerve growth factor.</text>
</comment>
<comment type="similarity">
    <text evidence="4">Belongs to the EGR C2H2-type zinc-finger protein family.</text>
</comment>
<evidence type="ECO:0000255" key="1">
    <source>
        <dbReference type="PROSITE-ProRule" id="PRU00042"/>
    </source>
</evidence>
<evidence type="ECO:0000256" key="2">
    <source>
        <dbReference type="SAM" id="MobiDB-lite"/>
    </source>
</evidence>
<evidence type="ECO:0000269" key="3">
    <source>
    </source>
</evidence>
<evidence type="ECO:0000305" key="4"/>
<sequence length="478" mass="49668">MLHLSDFSGPDALLSKPTEGCAHTSPELPRLPARDAPSAAAYPGGDFLSWALSTCGAGGDLTDSCFLEGPAPTPPSGLSYSGSFFIQAVPEHPHDPEALFNLMSGILGLAPFPSPEAAASRSPLDVPFPAGPDALLPDLYSPDLSSAAFPEAFWEAAPSAGAPSQCLFEPQLSPPDVKPGLRAPPASPALDAAASAFKGPYAPWELLSAGAPGNCGSQGSFQTTPEARFSAVGTKVEDLLSISCPAELPGPASRLYPPGAYDAFSLAPGDLGEGTEGLPALLTPPGGEGGSGGEGGEFLAVPQAQLSPLGLRGAATADFSKALVADLPGGSGVAAPSSPATSFPAAKARRKGRRGGKCSARCFCPRPHVKAFACPVESCVRTFARSDELNRHLRIHTGHKPFQCRICLRNFSRSDHLTTHVRTHTGEKPFACDVCGRRFARSDEKKRHSKVHLKQKARAEERLKGLGFYSLGLSFAAL</sequence>